<dbReference type="EC" id="2.7.7.7" evidence="1"/>
<dbReference type="EMBL" id="CP000155">
    <property type="protein sequence ID" value="ABC29028.1"/>
    <property type="molecule type" value="Genomic_DNA"/>
</dbReference>
<dbReference type="RefSeq" id="WP_011396097.1">
    <property type="nucleotide sequence ID" value="NC_007645.1"/>
</dbReference>
<dbReference type="SMR" id="Q2SJZ6"/>
<dbReference type="STRING" id="349521.HCH_02200"/>
<dbReference type="KEGG" id="hch:HCH_02200"/>
<dbReference type="eggNOG" id="COG0587">
    <property type="taxonomic scope" value="Bacteria"/>
</dbReference>
<dbReference type="HOGENOM" id="CLU_001600_4_0_6"/>
<dbReference type="OrthoDB" id="9803237at2"/>
<dbReference type="Proteomes" id="UP000000238">
    <property type="component" value="Chromosome"/>
</dbReference>
<dbReference type="GO" id="GO:0005737">
    <property type="term" value="C:cytoplasm"/>
    <property type="evidence" value="ECO:0007669"/>
    <property type="project" value="UniProtKB-SubCell"/>
</dbReference>
<dbReference type="GO" id="GO:0008408">
    <property type="term" value="F:3'-5' exonuclease activity"/>
    <property type="evidence" value="ECO:0007669"/>
    <property type="project" value="InterPro"/>
</dbReference>
<dbReference type="GO" id="GO:0003887">
    <property type="term" value="F:DNA-directed DNA polymerase activity"/>
    <property type="evidence" value="ECO:0007669"/>
    <property type="project" value="UniProtKB-UniRule"/>
</dbReference>
<dbReference type="GO" id="GO:0003676">
    <property type="term" value="F:nucleic acid binding"/>
    <property type="evidence" value="ECO:0007669"/>
    <property type="project" value="InterPro"/>
</dbReference>
<dbReference type="GO" id="GO:0006281">
    <property type="term" value="P:DNA repair"/>
    <property type="evidence" value="ECO:0007669"/>
    <property type="project" value="UniProtKB-UniRule"/>
</dbReference>
<dbReference type="GO" id="GO:0006260">
    <property type="term" value="P:DNA replication"/>
    <property type="evidence" value="ECO:0007669"/>
    <property type="project" value="UniProtKB-KW"/>
</dbReference>
<dbReference type="CDD" id="cd04485">
    <property type="entry name" value="DnaE_OBF"/>
    <property type="match status" value="1"/>
</dbReference>
<dbReference type="CDD" id="cd07434">
    <property type="entry name" value="PHP_PolIIIA_DnaE2"/>
    <property type="match status" value="1"/>
</dbReference>
<dbReference type="Gene3D" id="1.10.150.870">
    <property type="match status" value="1"/>
</dbReference>
<dbReference type="Gene3D" id="3.20.20.140">
    <property type="entry name" value="Metal-dependent hydrolases"/>
    <property type="match status" value="1"/>
</dbReference>
<dbReference type="Gene3D" id="2.40.50.140">
    <property type="entry name" value="Nucleic acid-binding proteins"/>
    <property type="match status" value="1"/>
</dbReference>
<dbReference type="HAMAP" id="MF_01902">
    <property type="entry name" value="DNApol_error_prone"/>
    <property type="match status" value="1"/>
</dbReference>
<dbReference type="InterPro" id="IPR011708">
    <property type="entry name" value="DNA_pol3_alpha_NTPase_dom"/>
</dbReference>
<dbReference type="InterPro" id="IPR040982">
    <property type="entry name" value="DNA_pol3_finger"/>
</dbReference>
<dbReference type="InterPro" id="IPR023073">
    <property type="entry name" value="DnaE2"/>
</dbReference>
<dbReference type="InterPro" id="IPR004805">
    <property type="entry name" value="DnaE2/DnaE/PolC"/>
</dbReference>
<dbReference type="InterPro" id="IPR029460">
    <property type="entry name" value="DNAPol_HHH"/>
</dbReference>
<dbReference type="InterPro" id="IPR012340">
    <property type="entry name" value="NA-bd_OB-fold"/>
</dbReference>
<dbReference type="InterPro" id="IPR004365">
    <property type="entry name" value="NA-bd_OB_tRNA"/>
</dbReference>
<dbReference type="InterPro" id="IPR004013">
    <property type="entry name" value="PHP_dom"/>
</dbReference>
<dbReference type="InterPro" id="IPR003141">
    <property type="entry name" value="Pol/His_phosphatase_N"/>
</dbReference>
<dbReference type="InterPro" id="IPR016195">
    <property type="entry name" value="Pol/histidinol_Pase-like"/>
</dbReference>
<dbReference type="NCBIfam" id="TIGR00594">
    <property type="entry name" value="polc"/>
    <property type="match status" value="1"/>
</dbReference>
<dbReference type="NCBIfam" id="NF004225">
    <property type="entry name" value="PRK05672.1"/>
    <property type="match status" value="1"/>
</dbReference>
<dbReference type="PANTHER" id="PTHR32294">
    <property type="entry name" value="DNA POLYMERASE III SUBUNIT ALPHA"/>
    <property type="match status" value="1"/>
</dbReference>
<dbReference type="PANTHER" id="PTHR32294:SF4">
    <property type="entry name" value="ERROR-PRONE DNA POLYMERASE"/>
    <property type="match status" value="1"/>
</dbReference>
<dbReference type="Pfam" id="PF07733">
    <property type="entry name" value="DNA_pol3_alpha"/>
    <property type="match status" value="1"/>
</dbReference>
<dbReference type="Pfam" id="PF17657">
    <property type="entry name" value="DNA_pol3_finger"/>
    <property type="match status" value="1"/>
</dbReference>
<dbReference type="Pfam" id="PF14579">
    <property type="entry name" value="HHH_6"/>
    <property type="match status" value="1"/>
</dbReference>
<dbReference type="Pfam" id="PF02811">
    <property type="entry name" value="PHP"/>
    <property type="match status" value="1"/>
</dbReference>
<dbReference type="Pfam" id="PF01336">
    <property type="entry name" value="tRNA_anti-codon"/>
    <property type="match status" value="1"/>
</dbReference>
<dbReference type="SMART" id="SM00481">
    <property type="entry name" value="POLIIIAc"/>
    <property type="match status" value="1"/>
</dbReference>
<dbReference type="SUPFAM" id="SSF89550">
    <property type="entry name" value="PHP domain-like"/>
    <property type="match status" value="1"/>
</dbReference>
<proteinExistence type="inferred from homology"/>
<protein>
    <recommendedName>
        <fullName evidence="1">Error-prone DNA polymerase</fullName>
        <ecNumber evidence="1">2.7.7.7</ecNumber>
    </recommendedName>
</protein>
<feature type="chain" id="PRO_1000073690" description="Error-prone DNA polymerase">
    <location>
        <begin position="1"/>
        <end position="1032"/>
    </location>
</feature>
<name>DNAE2_HAHCH</name>
<evidence type="ECO:0000255" key="1">
    <source>
        <dbReference type="HAMAP-Rule" id="MF_01902"/>
    </source>
</evidence>
<accession>Q2SJZ6</accession>
<comment type="function">
    <text evidence="1">DNA polymerase involved in damage-induced mutagenesis and translesion synthesis (TLS). It is not the major replicative DNA polymerase.</text>
</comment>
<comment type="catalytic activity">
    <reaction evidence="1">
        <text>DNA(n) + a 2'-deoxyribonucleoside 5'-triphosphate = DNA(n+1) + diphosphate</text>
        <dbReference type="Rhea" id="RHEA:22508"/>
        <dbReference type="Rhea" id="RHEA-COMP:17339"/>
        <dbReference type="Rhea" id="RHEA-COMP:17340"/>
        <dbReference type="ChEBI" id="CHEBI:33019"/>
        <dbReference type="ChEBI" id="CHEBI:61560"/>
        <dbReference type="ChEBI" id="CHEBI:173112"/>
        <dbReference type="EC" id="2.7.7.7"/>
    </reaction>
</comment>
<comment type="subcellular location">
    <subcellularLocation>
        <location evidence="1">Cytoplasm</location>
    </subcellularLocation>
</comment>
<comment type="similarity">
    <text evidence="1">Belongs to the DNA polymerase type-C family. DnaE2 subfamily.</text>
</comment>
<reference key="1">
    <citation type="journal article" date="2005" name="Nucleic Acids Res.">
        <title>Genomic blueprint of Hahella chejuensis, a marine microbe producing an algicidal agent.</title>
        <authorList>
            <person name="Jeong H."/>
            <person name="Yim J.H."/>
            <person name="Lee C."/>
            <person name="Choi S.-H."/>
            <person name="Park Y.K."/>
            <person name="Yoon S.H."/>
            <person name="Hur C.-G."/>
            <person name="Kang H.-Y."/>
            <person name="Kim D."/>
            <person name="Lee H.H."/>
            <person name="Park K.H."/>
            <person name="Park S.-H."/>
            <person name="Park H.-S."/>
            <person name="Lee H.K."/>
            <person name="Oh T.K."/>
            <person name="Kim J.F."/>
        </authorList>
    </citation>
    <scope>NUCLEOTIDE SEQUENCE [LARGE SCALE GENOMIC DNA]</scope>
    <source>
        <strain>KCTC 2396</strain>
    </source>
</reference>
<keyword id="KW-0963">Cytoplasm</keyword>
<keyword id="KW-0227">DNA damage</keyword>
<keyword id="KW-0234">DNA repair</keyword>
<keyword id="KW-0235">DNA replication</keyword>
<keyword id="KW-0239">DNA-directed DNA polymerase</keyword>
<keyword id="KW-0548">Nucleotidyltransferase</keyword>
<keyword id="KW-1185">Reference proteome</keyword>
<keyword id="KW-0808">Transferase</keyword>
<gene>
    <name evidence="1" type="primary">dnaE2</name>
    <name type="ordered locus">HCH_02200</name>
</gene>
<sequence>MSFVELHCISNYSFLKGASHPEELVRQAIAQGYEGLAITDECSVAGAVKAWRELRRLRQEAPEASAFKLIIGSEFHYEGNCFVVLAPHKKAYGELCRFITDCRRKADKGDYQFSPDALNENIKQGLLLWRPKQSDQEFIPALTKIFSGRLWLLLELSLSEEDDSERELIQTLSSAYNLPVVSSNGVKMHAPERKRLHDALTAIRFNQSVDSIKDRLAPNAENYLRPLNEIHEIYPSFTIQESLRIAAKCAFELNEIRYQYPKEVVPEGDDPSAYLRRLTYEGAHLRYPQGIPENVLATLEKELNIISELQYEYYFLTIFDIVDYAKKSQILCQGRGSAANSVVCYCLGITAVDPTRASLLFERFISKGRDEPPDIDVDFENARREEVIQYLYRRYGRERCAIAATVITYRPKSAIRDLGKALGVDLLQLESVIANYGWRYRGQDWIDEVITPQVSQDNHILTCFKELLPELLGFPRHLSQHVGGFVLSAGPLVELVPIENAAMEDRTVIQWDKDDLESLGLMKVDVLALGMLTALKKCTTYISEITGKTFSLESIPKEEDSQVYDMLQRADTVGLFQVESRAQMNMLPRLRPEKYYDLVVQVAIVRPGPIHGDMVHPYLRRRHNLEDPDDVPLPELKPILKRTFGVPIFQEQVIAIAIVGAGFTSEEAEELRRSMASWKRRGHMGKLMDKLIINLLKKGVPLEYIQRLCRQIEGFGEYGFPESHAASFALLAYHSGWLKYYYPSAFCCALLNSQPMGFYAPWQVIQDAQRHGVIVLPVDINNSYWEHRLEPHSDNTKEGALRLGFRLVKGLSEEAACSIIQHRTDEGFTSLVQVMHLPKINREDLEALASANALASLGENRYQQRWECSGFLYYYQLFSECEYINIDFEPPSRLDNIYEDHSSTGVVLNDHPLAYLREANLTPQCLTAVELLKQKAGLKTYVAGVVINRQRPKTSTGVTFVTLEDETGSINILVWKKTAIAQMDILVKARLLMVYGELDKDEEGRVAHVLAHRLTDLTPHLEELESRSRDFH</sequence>
<organism>
    <name type="scientific">Hahella chejuensis (strain KCTC 2396)</name>
    <dbReference type="NCBI Taxonomy" id="349521"/>
    <lineage>
        <taxon>Bacteria</taxon>
        <taxon>Pseudomonadati</taxon>
        <taxon>Pseudomonadota</taxon>
        <taxon>Gammaproteobacteria</taxon>
        <taxon>Oceanospirillales</taxon>
        <taxon>Hahellaceae</taxon>
        <taxon>Hahella</taxon>
    </lineage>
</organism>